<reference key="1">
    <citation type="journal article" date="2004" name="Nature">
        <title>Genome evolution in yeasts.</title>
        <authorList>
            <person name="Dujon B."/>
            <person name="Sherman D."/>
            <person name="Fischer G."/>
            <person name="Durrens P."/>
            <person name="Casaregola S."/>
            <person name="Lafontaine I."/>
            <person name="de Montigny J."/>
            <person name="Marck C."/>
            <person name="Neuveglise C."/>
            <person name="Talla E."/>
            <person name="Goffard N."/>
            <person name="Frangeul L."/>
            <person name="Aigle M."/>
            <person name="Anthouard V."/>
            <person name="Babour A."/>
            <person name="Barbe V."/>
            <person name="Barnay S."/>
            <person name="Blanchin S."/>
            <person name="Beckerich J.-M."/>
            <person name="Beyne E."/>
            <person name="Bleykasten C."/>
            <person name="Boisrame A."/>
            <person name="Boyer J."/>
            <person name="Cattolico L."/>
            <person name="Confanioleri F."/>
            <person name="de Daruvar A."/>
            <person name="Despons L."/>
            <person name="Fabre E."/>
            <person name="Fairhead C."/>
            <person name="Ferry-Dumazet H."/>
            <person name="Groppi A."/>
            <person name="Hantraye F."/>
            <person name="Hennequin C."/>
            <person name="Jauniaux N."/>
            <person name="Joyet P."/>
            <person name="Kachouri R."/>
            <person name="Kerrest A."/>
            <person name="Koszul R."/>
            <person name="Lemaire M."/>
            <person name="Lesur I."/>
            <person name="Ma L."/>
            <person name="Muller H."/>
            <person name="Nicaud J.-M."/>
            <person name="Nikolski M."/>
            <person name="Oztas S."/>
            <person name="Ozier-Kalogeropoulos O."/>
            <person name="Pellenz S."/>
            <person name="Potier S."/>
            <person name="Richard G.-F."/>
            <person name="Straub M.-L."/>
            <person name="Suleau A."/>
            <person name="Swennen D."/>
            <person name="Tekaia F."/>
            <person name="Wesolowski-Louvel M."/>
            <person name="Westhof E."/>
            <person name="Wirth B."/>
            <person name="Zeniou-Meyer M."/>
            <person name="Zivanovic Y."/>
            <person name="Bolotin-Fukuhara M."/>
            <person name="Thierry A."/>
            <person name="Bouchier C."/>
            <person name="Caudron B."/>
            <person name="Scarpelli C."/>
            <person name="Gaillardin C."/>
            <person name="Weissenbach J."/>
            <person name="Wincker P."/>
            <person name="Souciet J.-L."/>
        </authorList>
    </citation>
    <scope>NUCLEOTIDE SEQUENCE [LARGE SCALE GENOMIC DNA]</scope>
    <source>
        <strain>ATCC 8585 / CBS 2359 / DSM 70799 / NBRC 1267 / NRRL Y-1140 / WM37</strain>
    </source>
</reference>
<dbReference type="EC" id="3.6.4.13"/>
<dbReference type="EMBL" id="CR382124">
    <property type="protein sequence ID" value="CAH00984.1"/>
    <property type="molecule type" value="Genomic_DNA"/>
</dbReference>
<dbReference type="RefSeq" id="XP_453888.1">
    <property type="nucleotide sequence ID" value="XM_453888.1"/>
</dbReference>
<dbReference type="SMR" id="Q6CQA1"/>
<dbReference type="FunCoup" id="Q6CQA1">
    <property type="interactions" value="241"/>
</dbReference>
<dbReference type="STRING" id="284590.Q6CQA1"/>
<dbReference type="PaxDb" id="284590-Q6CQA1"/>
<dbReference type="KEGG" id="kla:KLLA0_D18667g"/>
<dbReference type="eggNOG" id="KOG0342">
    <property type="taxonomic scope" value="Eukaryota"/>
</dbReference>
<dbReference type="HOGENOM" id="CLU_003041_26_6_1"/>
<dbReference type="InParanoid" id="Q6CQA1"/>
<dbReference type="OMA" id="AHEKIDQ"/>
<dbReference type="Proteomes" id="UP000000598">
    <property type="component" value="Chromosome D"/>
</dbReference>
<dbReference type="GO" id="GO:0005759">
    <property type="term" value="C:mitochondrial matrix"/>
    <property type="evidence" value="ECO:0007669"/>
    <property type="project" value="UniProtKB-SubCell"/>
</dbReference>
<dbReference type="GO" id="GO:0005524">
    <property type="term" value="F:ATP binding"/>
    <property type="evidence" value="ECO:0007669"/>
    <property type="project" value="UniProtKB-KW"/>
</dbReference>
<dbReference type="GO" id="GO:0016887">
    <property type="term" value="F:ATP hydrolysis activity"/>
    <property type="evidence" value="ECO:0007669"/>
    <property type="project" value="RHEA"/>
</dbReference>
<dbReference type="GO" id="GO:0003723">
    <property type="term" value="F:RNA binding"/>
    <property type="evidence" value="ECO:0007669"/>
    <property type="project" value="UniProtKB-KW"/>
</dbReference>
<dbReference type="GO" id="GO:0003724">
    <property type="term" value="F:RNA helicase activity"/>
    <property type="evidence" value="ECO:0007669"/>
    <property type="project" value="UniProtKB-EC"/>
</dbReference>
<dbReference type="GO" id="GO:0006397">
    <property type="term" value="P:mRNA processing"/>
    <property type="evidence" value="ECO:0007669"/>
    <property type="project" value="UniProtKB-KW"/>
</dbReference>
<dbReference type="GO" id="GO:0006417">
    <property type="term" value="P:regulation of translation"/>
    <property type="evidence" value="ECO:0007669"/>
    <property type="project" value="UniProtKB-KW"/>
</dbReference>
<dbReference type="GO" id="GO:0008380">
    <property type="term" value="P:RNA splicing"/>
    <property type="evidence" value="ECO:0007669"/>
    <property type="project" value="UniProtKB-KW"/>
</dbReference>
<dbReference type="CDD" id="cd17964">
    <property type="entry name" value="DEADc_MSS116"/>
    <property type="match status" value="1"/>
</dbReference>
<dbReference type="CDD" id="cd18787">
    <property type="entry name" value="SF2_C_DEAD"/>
    <property type="match status" value="1"/>
</dbReference>
<dbReference type="Gene3D" id="3.40.50.300">
    <property type="entry name" value="P-loop containing nucleotide triphosphate hydrolases"/>
    <property type="match status" value="2"/>
</dbReference>
<dbReference type="InterPro" id="IPR011545">
    <property type="entry name" value="DEAD/DEAH_box_helicase_dom"/>
</dbReference>
<dbReference type="InterPro" id="IPR014001">
    <property type="entry name" value="Helicase_ATP-bd"/>
</dbReference>
<dbReference type="InterPro" id="IPR001650">
    <property type="entry name" value="Helicase_C-like"/>
</dbReference>
<dbReference type="InterPro" id="IPR027417">
    <property type="entry name" value="P-loop_NTPase"/>
</dbReference>
<dbReference type="PANTHER" id="PTHR24031">
    <property type="entry name" value="RNA HELICASE"/>
    <property type="match status" value="1"/>
</dbReference>
<dbReference type="Pfam" id="PF00270">
    <property type="entry name" value="DEAD"/>
    <property type="match status" value="1"/>
</dbReference>
<dbReference type="Pfam" id="PF00271">
    <property type="entry name" value="Helicase_C"/>
    <property type="match status" value="1"/>
</dbReference>
<dbReference type="SMART" id="SM00487">
    <property type="entry name" value="DEXDc"/>
    <property type="match status" value="1"/>
</dbReference>
<dbReference type="SMART" id="SM00490">
    <property type="entry name" value="HELICc"/>
    <property type="match status" value="1"/>
</dbReference>
<dbReference type="SUPFAM" id="SSF52540">
    <property type="entry name" value="P-loop containing nucleoside triphosphate hydrolases"/>
    <property type="match status" value="1"/>
</dbReference>
<dbReference type="PROSITE" id="PS51192">
    <property type="entry name" value="HELICASE_ATP_BIND_1"/>
    <property type="match status" value="1"/>
</dbReference>
<dbReference type="PROSITE" id="PS51194">
    <property type="entry name" value="HELICASE_CTER"/>
    <property type="match status" value="1"/>
</dbReference>
<dbReference type="PROSITE" id="PS51195">
    <property type="entry name" value="Q_MOTIF"/>
    <property type="match status" value="1"/>
</dbReference>
<gene>
    <name type="primary">MSS116</name>
    <name type="ordered locus">KLLA0D18667g</name>
</gene>
<accession>Q6CQA1</accession>
<keyword id="KW-0067">ATP-binding</keyword>
<keyword id="KW-0347">Helicase</keyword>
<keyword id="KW-0378">Hydrolase</keyword>
<keyword id="KW-0496">Mitochondrion</keyword>
<keyword id="KW-0507">mRNA processing</keyword>
<keyword id="KW-0508">mRNA splicing</keyword>
<keyword id="KW-0547">Nucleotide-binding</keyword>
<keyword id="KW-1185">Reference proteome</keyword>
<keyword id="KW-0694">RNA-binding</keyword>
<keyword id="KW-0809">Transit peptide</keyword>
<keyword id="KW-0810">Translation regulation</keyword>
<organism>
    <name type="scientific">Kluyveromyces lactis (strain ATCC 8585 / CBS 2359 / DSM 70799 / NBRC 1267 / NRRL Y-1140 / WM37)</name>
    <name type="common">Yeast</name>
    <name type="synonym">Candida sphaerica</name>
    <dbReference type="NCBI Taxonomy" id="284590"/>
    <lineage>
        <taxon>Eukaryota</taxon>
        <taxon>Fungi</taxon>
        <taxon>Dikarya</taxon>
        <taxon>Ascomycota</taxon>
        <taxon>Saccharomycotina</taxon>
        <taxon>Saccharomycetes</taxon>
        <taxon>Saccharomycetales</taxon>
        <taxon>Saccharomycetaceae</taxon>
        <taxon>Kluyveromyces</taxon>
    </lineage>
</organism>
<comment type="function">
    <text evidence="1">ATP-dependent RNA helicase required for mitochondrial splicing of group I and II introns. Also required for efficient mitochondrial translation (By similarity).</text>
</comment>
<comment type="catalytic activity">
    <reaction>
        <text>ATP + H2O = ADP + phosphate + H(+)</text>
        <dbReference type="Rhea" id="RHEA:13065"/>
        <dbReference type="ChEBI" id="CHEBI:15377"/>
        <dbReference type="ChEBI" id="CHEBI:15378"/>
        <dbReference type="ChEBI" id="CHEBI:30616"/>
        <dbReference type="ChEBI" id="CHEBI:43474"/>
        <dbReference type="ChEBI" id="CHEBI:456216"/>
        <dbReference type="EC" id="3.6.4.13"/>
    </reaction>
</comment>
<comment type="subcellular location">
    <subcellularLocation>
        <location evidence="1">Mitochondrion matrix</location>
    </subcellularLocation>
</comment>
<comment type="domain">
    <text>The Q motif is unique to and characteristic of the DEAD box family of RNA helicases and controls ATP binding and hydrolysis.</text>
</comment>
<comment type="similarity">
    <text evidence="6">Belongs to the DEAD box helicase family. DDX18/HAS1 subfamily.</text>
</comment>
<proteinExistence type="inferred from homology"/>
<protein>
    <recommendedName>
        <fullName>ATP-dependent RNA helicase MSS116, mitochondrial</fullName>
        <ecNumber>3.6.4.13</ecNumber>
    </recommendedName>
</protein>
<sequence>MLVLQRIPKRALQFNGVTGTVCSTRLFHHAFNLNLQQSFVPSEERRYRNSNRGFTRGSDSNSNNKYRNSSYDDNRSRSNYGGDKRNNRNNNNYGNNRNNGSRRRYQDENSDIEVFKSKSFNVTTLNPESFHEQVTIDSLLEESLLDANVHKAISAMKFESLTPVQQRTIKPILTTENDVVAKAKTGTGKTLAFLAPLFQHLISTKLQNPLAVKAVIVTPTRDLAIQIASEVKKLQQCNPSLKSYRSLTLIGGTNLDKSLKDLHTLNPNIIVGTPGRINDILDRVGAKYFKDVDFKVLDEADTLLQIGFQTELSLISRKLNEFNTQGEEHIRTLLFSATMDHNVQELAATIMNKKDCLFIDTVDKNDSEAHDSIDQKLVITKSFAESMVALIQSIESELLQKKNFKAILFLPTVKFVDFFSETLSESLTKRIDIIKFHGKIDQKKRTKLVDRFKKTNHGIFVCTDVGARGMHFPSVEHVYQLCVPTSLPNYIHRIGRTARAGESGAATIFLFREELKFVDELRRDTNVVIKNQEDYLNQDKENFDMISSIITNNPDFPEALKSIIGFYKGVQNEYRLNYKVAQNVLRSFSELHSDSSMLLRFRPSEINNFFSNRDMRFVSDLIDVKNPHSFGKDREFDDEDRYTSRSQNNYKSKQSSKSNRFEGRNDYSNSRRSHANQKRNFTFDD</sequence>
<evidence type="ECO:0000250" key="1"/>
<evidence type="ECO:0000255" key="2"/>
<evidence type="ECO:0000255" key="3">
    <source>
        <dbReference type="PROSITE-ProRule" id="PRU00541"/>
    </source>
</evidence>
<evidence type="ECO:0000255" key="4">
    <source>
        <dbReference type="PROSITE-ProRule" id="PRU00542"/>
    </source>
</evidence>
<evidence type="ECO:0000256" key="5">
    <source>
        <dbReference type="SAM" id="MobiDB-lite"/>
    </source>
</evidence>
<evidence type="ECO:0000305" key="6"/>
<feature type="transit peptide" description="Mitochondrion" evidence="2">
    <location>
        <begin position="1"/>
        <end position="34"/>
    </location>
</feature>
<feature type="chain" id="PRO_0000256011" description="ATP-dependent RNA helicase MSS116, mitochondrial">
    <location>
        <begin position="35"/>
        <end position="685"/>
    </location>
</feature>
<feature type="domain" description="Helicase ATP-binding" evidence="3">
    <location>
        <begin position="170"/>
        <end position="357"/>
    </location>
</feature>
<feature type="domain" description="Helicase C-terminal" evidence="4">
    <location>
        <begin position="386"/>
        <end position="542"/>
    </location>
</feature>
<feature type="region of interest" description="Disordered" evidence="5">
    <location>
        <begin position="42"/>
        <end position="107"/>
    </location>
</feature>
<feature type="region of interest" description="Disordered" evidence="5">
    <location>
        <begin position="633"/>
        <end position="685"/>
    </location>
</feature>
<feature type="short sequence motif" description="Q motif">
    <location>
        <begin position="138"/>
        <end position="166"/>
    </location>
</feature>
<feature type="short sequence motif" description="DEAD box">
    <location>
        <begin position="298"/>
        <end position="301"/>
    </location>
</feature>
<feature type="compositionally biased region" description="Low complexity" evidence="5">
    <location>
        <begin position="58"/>
        <end position="69"/>
    </location>
</feature>
<feature type="compositionally biased region" description="Basic and acidic residues" evidence="5">
    <location>
        <begin position="70"/>
        <end position="86"/>
    </location>
</feature>
<feature type="compositionally biased region" description="Low complexity" evidence="5">
    <location>
        <begin position="88"/>
        <end position="99"/>
    </location>
</feature>
<feature type="compositionally biased region" description="Low complexity" evidence="5">
    <location>
        <begin position="644"/>
        <end position="658"/>
    </location>
</feature>
<feature type="binding site" evidence="3">
    <location>
        <begin position="183"/>
        <end position="190"/>
    </location>
    <ligand>
        <name>ATP</name>
        <dbReference type="ChEBI" id="CHEBI:30616"/>
    </ligand>
</feature>
<name>MS116_KLULA</name>